<accession>Q39H98</accession>
<name>IOLG_BURL3</name>
<proteinExistence type="inferred from homology"/>
<gene>
    <name evidence="1" type="primary">iolG</name>
    <name type="ordered locus">Bcep18194_A4572</name>
</gene>
<evidence type="ECO:0000255" key="1">
    <source>
        <dbReference type="HAMAP-Rule" id="MF_01671"/>
    </source>
</evidence>
<sequence length="337" mass="36631">MTLQIGVIGCGAIGQDHIRRLTRTLSGARVVAVNDIDPQQARDAVTKYGLDAEIYGDGHEVVAAADVQAVLVTSWGPTHEAFVLDAIAHGKPVFCEKPLAVTAEGCMRIVEAEVAHGKRLVQVGFMRPYDEGYRALKRVIDSGEIGAPLMLHCAHRNQSVGERYTTDMAITDTLIHELDVLRWLLGEDYVSTQVVYPKKTRHASSHLADPQIVLLETASGVRIDVEIFVNCQYGYDIQCEVVGEQGIAKLPDPPAVGLKHGARQSVEIMTDWKERFIASYDVELQAFIDGVRAHALTGPSAWDGYAAAVAADACVRAQKSGAVEPIAMAERPAFYRG</sequence>
<dbReference type="EC" id="1.1.1.18" evidence="1"/>
<dbReference type="EMBL" id="CP000151">
    <property type="protein sequence ID" value="ABB08168.1"/>
    <property type="molecule type" value="Genomic_DNA"/>
</dbReference>
<dbReference type="RefSeq" id="WP_011351738.1">
    <property type="nucleotide sequence ID" value="NC_007510.1"/>
</dbReference>
<dbReference type="SMR" id="Q39H98"/>
<dbReference type="GeneID" id="45094467"/>
<dbReference type="KEGG" id="bur:Bcep18194_A4572"/>
<dbReference type="PATRIC" id="fig|482957.22.peg.1476"/>
<dbReference type="HOGENOM" id="CLU_023194_0_1_4"/>
<dbReference type="Proteomes" id="UP000002705">
    <property type="component" value="Chromosome 1"/>
</dbReference>
<dbReference type="GO" id="GO:0050112">
    <property type="term" value="F:inositol 2-dehydrogenase (NAD+) activity"/>
    <property type="evidence" value="ECO:0007669"/>
    <property type="project" value="UniProtKB-UniRule"/>
</dbReference>
<dbReference type="GO" id="GO:0000166">
    <property type="term" value="F:nucleotide binding"/>
    <property type="evidence" value="ECO:0007669"/>
    <property type="project" value="InterPro"/>
</dbReference>
<dbReference type="GO" id="GO:0019310">
    <property type="term" value="P:inositol catabolic process"/>
    <property type="evidence" value="ECO:0007669"/>
    <property type="project" value="UniProtKB-UniRule"/>
</dbReference>
<dbReference type="Gene3D" id="3.30.360.10">
    <property type="entry name" value="Dihydrodipicolinate Reductase, domain 2"/>
    <property type="match status" value="1"/>
</dbReference>
<dbReference type="Gene3D" id="3.40.50.720">
    <property type="entry name" value="NAD(P)-binding Rossmann-like Domain"/>
    <property type="match status" value="1"/>
</dbReference>
<dbReference type="HAMAP" id="MF_01671">
    <property type="entry name" value="IolG"/>
    <property type="match status" value="1"/>
</dbReference>
<dbReference type="InterPro" id="IPR050424">
    <property type="entry name" value="Gfo-Idh-MocA_inositol_DH"/>
</dbReference>
<dbReference type="InterPro" id="IPR004104">
    <property type="entry name" value="Gfo/Idh/MocA-like_OxRdtase_C"/>
</dbReference>
<dbReference type="InterPro" id="IPR000683">
    <property type="entry name" value="Gfo/Idh/MocA-like_OxRdtase_N"/>
</dbReference>
<dbReference type="InterPro" id="IPR023794">
    <property type="entry name" value="MI/DCI_dehydrogenase"/>
</dbReference>
<dbReference type="InterPro" id="IPR036291">
    <property type="entry name" value="NAD(P)-bd_dom_sf"/>
</dbReference>
<dbReference type="PANTHER" id="PTHR43593">
    <property type="match status" value="1"/>
</dbReference>
<dbReference type="PANTHER" id="PTHR43593:SF1">
    <property type="entry name" value="INOSITOL 2-DEHYDROGENASE"/>
    <property type="match status" value="1"/>
</dbReference>
<dbReference type="Pfam" id="PF01408">
    <property type="entry name" value="GFO_IDH_MocA"/>
    <property type="match status" value="1"/>
</dbReference>
<dbReference type="Pfam" id="PF02894">
    <property type="entry name" value="GFO_IDH_MocA_C"/>
    <property type="match status" value="1"/>
</dbReference>
<dbReference type="SUPFAM" id="SSF55347">
    <property type="entry name" value="Glyceraldehyde-3-phosphate dehydrogenase-like, C-terminal domain"/>
    <property type="match status" value="1"/>
</dbReference>
<dbReference type="SUPFAM" id="SSF51735">
    <property type="entry name" value="NAD(P)-binding Rossmann-fold domains"/>
    <property type="match status" value="1"/>
</dbReference>
<protein>
    <recommendedName>
        <fullName evidence="1">Inositol 2-dehydrogenase</fullName>
        <ecNumber evidence="1">1.1.1.18</ecNumber>
    </recommendedName>
    <alternativeName>
        <fullName evidence="1">Myo-inositol 2-dehydrogenase</fullName>
        <shortName evidence="1">MI 2-dehydrogenase</shortName>
    </alternativeName>
</protein>
<keyword id="KW-0520">NAD</keyword>
<keyword id="KW-0560">Oxidoreductase</keyword>
<reference key="1">
    <citation type="submission" date="2005-10" db="EMBL/GenBank/DDBJ databases">
        <title>Complete sequence of chromosome 1 of Burkholderia sp. 383.</title>
        <authorList>
            <consortium name="US DOE Joint Genome Institute"/>
            <person name="Copeland A."/>
            <person name="Lucas S."/>
            <person name="Lapidus A."/>
            <person name="Barry K."/>
            <person name="Detter J.C."/>
            <person name="Glavina T."/>
            <person name="Hammon N."/>
            <person name="Israni S."/>
            <person name="Pitluck S."/>
            <person name="Chain P."/>
            <person name="Malfatti S."/>
            <person name="Shin M."/>
            <person name="Vergez L."/>
            <person name="Schmutz J."/>
            <person name="Larimer F."/>
            <person name="Land M."/>
            <person name="Kyrpides N."/>
            <person name="Lykidis A."/>
            <person name="Richardson P."/>
        </authorList>
    </citation>
    <scope>NUCLEOTIDE SEQUENCE [LARGE SCALE GENOMIC DNA]</scope>
    <source>
        <strain>ATCC 17760 / DSM 23089 / LMG 22485 / NCIMB 9086 / R18194 / 383</strain>
    </source>
</reference>
<organism>
    <name type="scientific">Burkholderia lata (strain ATCC 17760 / DSM 23089 / LMG 22485 / NCIMB 9086 / R18194 / 383)</name>
    <dbReference type="NCBI Taxonomy" id="482957"/>
    <lineage>
        <taxon>Bacteria</taxon>
        <taxon>Pseudomonadati</taxon>
        <taxon>Pseudomonadota</taxon>
        <taxon>Betaproteobacteria</taxon>
        <taxon>Burkholderiales</taxon>
        <taxon>Burkholderiaceae</taxon>
        <taxon>Burkholderia</taxon>
        <taxon>Burkholderia cepacia complex</taxon>
    </lineage>
</organism>
<feature type="chain" id="PRO_0000352564" description="Inositol 2-dehydrogenase">
    <location>
        <begin position="1"/>
        <end position="337"/>
    </location>
</feature>
<comment type="function">
    <text evidence="1">Involved in the oxidation of myo-inositol (MI) to 2-keto-myo-inositol (2KMI or 2-inosose).</text>
</comment>
<comment type="catalytic activity">
    <reaction evidence="1">
        <text>myo-inositol + NAD(+) = scyllo-inosose + NADH + H(+)</text>
        <dbReference type="Rhea" id="RHEA:16949"/>
        <dbReference type="ChEBI" id="CHEBI:15378"/>
        <dbReference type="ChEBI" id="CHEBI:17268"/>
        <dbReference type="ChEBI" id="CHEBI:17811"/>
        <dbReference type="ChEBI" id="CHEBI:57540"/>
        <dbReference type="ChEBI" id="CHEBI:57945"/>
        <dbReference type="EC" id="1.1.1.18"/>
    </reaction>
</comment>
<comment type="subunit">
    <text evidence="1">Homotetramer.</text>
</comment>
<comment type="similarity">
    <text evidence="1">Belongs to the Gfo/Idh/MocA family.</text>
</comment>